<sequence>MVIAAMLVPFVAIRSHDMTTYLYWTAVTAAYLTYLTIKRW</sequence>
<proteinExistence type="predicted"/>
<reference key="1">
    <citation type="journal article" date="1997" name="Nature">
        <title>The complete genome sequence of the hyperthermophilic, sulphate-reducing archaeon Archaeoglobus fulgidus.</title>
        <authorList>
            <person name="Klenk H.-P."/>
            <person name="Clayton R.A."/>
            <person name="Tomb J.-F."/>
            <person name="White O."/>
            <person name="Nelson K.E."/>
            <person name="Ketchum K.A."/>
            <person name="Dodson R.J."/>
            <person name="Gwinn M.L."/>
            <person name="Hickey E.K."/>
            <person name="Peterson J.D."/>
            <person name="Richardson D.L."/>
            <person name="Kerlavage A.R."/>
            <person name="Graham D.E."/>
            <person name="Kyrpides N.C."/>
            <person name="Fleischmann R.D."/>
            <person name="Quackenbush J."/>
            <person name="Lee N.H."/>
            <person name="Sutton G.G."/>
            <person name="Gill S.R."/>
            <person name="Kirkness E.F."/>
            <person name="Dougherty B.A."/>
            <person name="McKenney K."/>
            <person name="Adams M.D."/>
            <person name="Loftus B.J."/>
            <person name="Peterson S.N."/>
            <person name="Reich C.I."/>
            <person name="McNeil L.K."/>
            <person name="Badger J.H."/>
            <person name="Glodek A."/>
            <person name="Zhou L."/>
            <person name="Overbeek R."/>
            <person name="Gocayne J.D."/>
            <person name="Weidman J.F."/>
            <person name="McDonald L.A."/>
            <person name="Utterback T.R."/>
            <person name="Cotton M.D."/>
            <person name="Spriggs T."/>
            <person name="Artiach P."/>
            <person name="Kaine B.P."/>
            <person name="Sykes S.M."/>
            <person name="Sadow P.W."/>
            <person name="D'Andrea K.P."/>
            <person name="Bowman C."/>
            <person name="Fujii C."/>
            <person name="Garland S.A."/>
            <person name="Mason T.M."/>
            <person name="Olsen G.J."/>
            <person name="Fraser C.M."/>
            <person name="Smith H.O."/>
            <person name="Woese C.R."/>
            <person name="Venter J.C."/>
        </authorList>
    </citation>
    <scope>NUCLEOTIDE SEQUENCE [LARGE SCALE GENOMIC DNA]</scope>
    <source>
        <strain>ATCC 49558 / DSM 4304 / JCM 9628 / NBRC 100126 / VC-16</strain>
    </source>
</reference>
<name>Y236_ARCFU</name>
<organism>
    <name type="scientific">Archaeoglobus fulgidus (strain ATCC 49558 / DSM 4304 / JCM 9628 / NBRC 100126 / VC-16)</name>
    <dbReference type="NCBI Taxonomy" id="224325"/>
    <lineage>
        <taxon>Archaea</taxon>
        <taxon>Methanobacteriati</taxon>
        <taxon>Methanobacteriota</taxon>
        <taxon>Archaeoglobi</taxon>
        <taxon>Archaeoglobales</taxon>
        <taxon>Archaeoglobaceae</taxon>
        <taxon>Archaeoglobus</taxon>
    </lineage>
</organism>
<dbReference type="EMBL" id="AE000782">
    <property type="protein sequence ID" value="AAB90997.1"/>
    <property type="molecule type" value="Genomic_DNA"/>
</dbReference>
<dbReference type="PIR" id="D69279">
    <property type="entry name" value="D69279"/>
</dbReference>
<dbReference type="STRING" id="224325.AF_0236"/>
<dbReference type="PaxDb" id="224325-AF_0236"/>
<dbReference type="EnsemblBacteria" id="AAB90997">
    <property type="protein sequence ID" value="AAB90997"/>
    <property type="gene ID" value="AF_0236"/>
</dbReference>
<dbReference type="KEGG" id="afu:AF_0236"/>
<dbReference type="eggNOG" id="arCOG10691">
    <property type="taxonomic scope" value="Archaea"/>
</dbReference>
<dbReference type="HOGENOM" id="CLU_214684_0_0_2"/>
<dbReference type="Proteomes" id="UP000002199">
    <property type="component" value="Chromosome"/>
</dbReference>
<dbReference type="GO" id="GO:0016020">
    <property type="term" value="C:membrane"/>
    <property type="evidence" value="ECO:0007669"/>
    <property type="project" value="UniProtKB-SubCell"/>
</dbReference>
<feature type="chain" id="PRO_0000127851" description="Uncharacterized protein AF_0236">
    <location>
        <begin position="1"/>
        <end position="40"/>
    </location>
</feature>
<feature type="transmembrane region" description="Helical" evidence="1">
    <location>
        <begin position="20"/>
        <end position="37"/>
    </location>
</feature>
<comment type="subcellular location">
    <subcellularLocation>
        <location evidence="2">Membrane</location>
        <topology evidence="2">Single-pass membrane protein</topology>
    </subcellularLocation>
</comment>
<gene>
    <name type="ordered locus">AF_0236</name>
</gene>
<accession>O30003</accession>
<protein>
    <recommendedName>
        <fullName>Uncharacterized protein AF_0236</fullName>
    </recommendedName>
</protein>
<evidence type="ECO:0000255" key="1"/>
<evidence type="ECO:0000305" key="2"/>
<keyword id="KW-0472">Membrane</keyword>
<keyword id="KW-1185">Reference proteome</keyword>
<keyword id="KW-0812">Transmembrane</keyword>
<keyword id="KW-1133">Transmembrane helix</keyword>